<reference key="1">
    <citation type="journal article" date="2002" name="Nature">
        <title>Genome sequence of the plant pathogen Ralstonia solanacearum.</title>
        <authorList>
            <person name="Salanoubat M."/>
            <person name="Genin S."/>
            <person name="Artiguenave F."/>
            <person name="Gouzy J."/>
            <person name="Mangenot S."/>
            <person name="Arlat M."/>
            <person name="Billault A."/>
            <person name="Brottier P."/>
            <person name="Camus J.-C."/>
            <person name="Cattolico L."/>
            <person name="Chandler M."/>
            <person name="Choisne N."/>
            <person name="Claudel-Renard C."/>
            <person name="Cunnac S."/>
            <person name="Demange N."/>
            <person name="Gaspin C."/>
            <person name="Lavie M."/>
            <person name="Moisan A."/>
            <person name="Robert C."/>
            <person name="Saurin W."/>
            <person name="Schiex T."/>
            <person name="Siguier P."/>
            <person name="Thebault P."/>
            <person name="Whalen M."/>
            <person name="Wincker P."/>
            <person name="Levy M."/>
            <person name="Weissenbach J."/>
            <person name="Boucher C.A."/>
        </authorList>
    </citation>
    <scope>NUCLEOTIDE SEQUENCE [LARGE SCALE GENOMIC DNA]</scope>
    <source>
        <strain>ATCC BAA-1114 / GMI1000</strain>
    </source>
</reference>
<accession>Q8XVS2</accession>
<comment type="function">
    <text evidence="1">Part of the ABC transporter complex AraFGH involved in arabinose import. Responsible for energy coupling to the transport system.</text>
</comment>
<comment type="catalytic activity">
    <reaction evidence="1">
        <text>L-arabinose(out) + ATP + H2O = L-arabinose(in) + ADP + phosphate + H(+)</text>
        <dbReference type="Rhea" id="RHEA:30007"/>
        <dbReference type="ChEBI" id="CHEBI:15377"/>
        <dbReference type="ChEBI" id="CHEBI:15378"/>
        <dbReference type="ChEBI" id="CHEBI:17535"/>
        <dbReference type="ChEBI" id="CHEBI:30616"/>
        <dbReference type="ChEBI" id="CHEBI:43474"/>
        <dbReference type="ChEBI" id="CHEBI:456216"/>
        <dbReference type="EC" id="7.5.2.12"/>
    </reaction>
</comment>
<comment type="subunit">
    <text evidence="1">The complex is composed of two ATP-binding proteins (AraG), two transmembrane proteins (AraH) and a solute-binding protein (AraF).</text>
</comment>
<comment type="subcellular location">
    <subcellularLocation>
        <location evidence="1">Cell inner membrane</location>
        <topology evidence="1">Peripheral membrane protein</topology>
    </subcellularLocation>
</comment>
<comment type="similarity">
    <text evidence="1">Belongs to the ABC transporter superfamily. Arabinose importer (TC 3.A.1.2.2) family.</text>
</comment>
<evidence type="ECO:0000255" key="1">
    <source>
        <dbReference type="HAMAP-Rule" id="MF_01721"/>
    </source>
</evidence>
<sequence length="511" mass="55936">MSAFLEFRGISKVFPGVRALSEVSFGIECGRVHGLLGENGAGKSTLLKILGGDYQPDGGQIAVEGRPVAFPNARAALAAGIAVIHQELQTVPELTVMDNLLLGHLPSRGGFIRQGEAMAWTRAQLARIGVDLDPKARLKHLSIGQRQMVEICKAILRDARVIALDEPTSSLSVRETDILFRLVKDLRAQGRALIYISHRLDEIFALCDGCTIFRDGRKVADFRSMADVTREQLVAQMVGRQIDDIFGYRPRAPGDVRLRVEGLMGPKLAEPASFAVRRGEIVGLFGLVGAGRSELARLVYGADRKTAGTVVLDGEPIRIRAVADAIRQGIVLCPEDRKEEGIIGCRSVSENINISCRRNRRPGWGGFNLFVDDRQEAKTADHYIARLRIKTPHRDQPIRLLSGGNQQKAILARWLAEDGMRVLIIDEPTRGIDVGAKNEIYQVLYELAERGVAVLMISSELPEILGVADRVLVMSEGRIAGELPRAQATEHAVLNLALRPRRDPCVAAQAA</sequence>
<dbReference type="EC" id="7.5.2.12" evidence="1"/>
<dbReference type="EMBL" id="AL646052">
    <property type="protein sequence ID" value="CAD16464.1"/>
    <property type="molecule type" value="Genomic_DNA"/>
</dbReference>
<dbReference type="RefSeq" id="WP_011002664.1">
    <property type="nucleotide sequence ID" value="NC_003295.1"/>
</dbReference>
<dbReference type="SMR" id="Q8XVS2"/>
<dbReference type="STRING" id="267608.RSc2757"/>
<dbReference type="EnsemblBacteria" id="CAD16464">
    <property type="protein sequence ID" value="CAD16464"/>
    <property type="gene ID" value="RSc2757"/>
</dbReference>
<dbReference type="KEGG" id="rso:RSc2757"/>
<dbReference type="eggNOG" id="COG1129">
    <property type="taxonomic scope" value="Bacteria"/>
</dbReference>
<dbReference type="HOGENOM" id="CLU_000604_92_3_4"/>
<dbReference type="Proteomes" id="UP000001436">
    <property type="component" value="Chromosome"/>
</dbReference>
<dbReference type="GO" id="GO:0005886">
    <property type="term" value="C:plasma membrane"/>
    <property type="evidence" value="ECO:0007669"/>
    <property type="project" value="UniProtKB-SubCell"/>
</dbReference>
<dbReference type="GO" id="GO:0015612">
    <property type="term" value="F:ABC-type L-arabinose transporter activity"/>
    <property type="evidence" value="ECO:0007669"/>
    <property type="project" value="UniProtKB-EC"/>
</dbReference>
<dbReference type="GO" id="GO:0005524">
    <property type="term" value="F:ATP binding"/>
    <property type="evidence" value="ECO:0007669"/>
    <property type="project" value="UniProtKB-KW"/>
</dbReference>
<dbReference type="GO" id="GO:0016887">
    <property type="term" value="F:ATP hydrolysis activity"/>
    <property type="evidence" value="ECO:0007669"/>
    <property type="project" value="InterPro"/>
</dbReference>
<dbReference type="CDD" id="cd03216">
    <property type="entry name" value="ABC_Carb_Monos_I"/>
    <property type="match status" value="1"/>
</dbReference>
<dbReference type="CDD" id="cd03215">
    <property type="entry name" value="ABC_Carb_Monos_II"/>
    <property type="match status" value="1"/>
</dbReference>
<dbReference type="FunFam" id="3.40.50.300:FF:000127">
    <property type="entry name" value="Ribose import ATP-binding protein RbsA"/>
    <property type="match status" value="1"/>
</dbReference>
<dbReference type="Gene3D" id="3.40.50.300">
    <property type="entry name" value="P-loop containing nucleotide triphosphate hydrolases"/>
    <property type="match status" value="2"/>
</dbReference>
<dbReference type="InterPro" id="IPR003593">
    <property type="entry name" value="AAA+_ATPase"/>
</dbReference>
<dbReference type="InterPro" id="IPR050107">
    <property type="entry name" value="ABC_carbohydrate_import_ATPase"/>
</dbReference>
<dbReference type="InterPro" id="IPR003439">
    <property type="entry name" value="ABC_transporter-like_ATP-bd"/>
</dbReference>
<dbReference type="InterPro" id="IPR017871">
    <property type="entry name" value="ABC_transporter-like_CS"/>
</dbReference>
<dbReference type="InterPro" id="IPR027417">
    <property type="entry name" value="P-loop_NTPase"/>
</dbReference>
<dbReference type="NCBIfam" id="NF008442">
    <property type="entry name" value="PRK11288.1"/>
    <property type="match status" value="1"/>
</dbReference>
<dbReference type="PANTHER" id="PTHR43790:SF6">
    <property type="entry name" value="ARABINOSE IMPORT ATP-BINDING PROTEIN ARAG"/>
    <property type="match status" value="1"/>
</dbReference>
<dbReference type="PANTHER" id="PTHR43790">
    <property type="entry name" value="CARBOHYDRATE TRANSPORT ATP-BINDING PROTEIN MG119-RELATED"/>
    <property type="match status" value="1"/>
</dbReference>
<dbReference type="Pfam" id="PF00005">
    <property type="entry name" value="ABC_tran"/>
    <property type="match status" value="2"/>
</dbReference>
<dbReference type="SMART" id="SM00382">
    <property type="entry name" value="AAA"/>
    <property type="match status" value="2"/>
</dbReference>
<dbReference type="SUPFAM" id="SSF52540">
    <property type="entry name" value="P-loop containing nucleoside triphosphate hydrolases"/>
    <property type="match status" value="2"/>
</dbReference>
<dbReference type="PROSITE" id="PS00211">
    <property type="entry name" value="ABC_TRANSPORTER_1"/>
    <property type="match status" value="1"/>
</dbReference>
<dbReference type="PROSITE" id="PS50893">
    <property type="entry name" value="ABC_TRANSPORTER_2"/>
    <property type="match status" value="2"/>
</dbReference>
<dbReference type="PROSITE" id="PS51268">
    <property type="entry name" value="ARAG"/>
    <property type="match status" value="1"/>
</dbReference>
<protein>
    <recommendedName>
        <fullName evidence="1">Arabinose import ATP-binding protein AraG</fullName>
        <ecNumber evidence="1">7.5.2.12</ecNumber>
    </recommendedName>
</protein>
<keyword id="KW-0067">ATP-binding</keyword>
<keyword id="KW-0997">Cell inner membrane</keyword>
<keyword id="KW-1003">Cell membrane</keyword>
<keyword id="KW-0472">Membrane</keyword>
<keyword id="KW-0547">Nucleotide-binding</keyword>
<keyword id="KW-1185">Reference proteome</keyword>
<keyword id="KW-0677">Repeat</keyword>
<keyword id="KW-0762">Sugar transport</keyword>
<keyword id="KW-1278">Translocase</keyword>
<keyword id="KW-0813">Transport</keyword>
<organism>
    <name type="scientific">Ralstonia nicotianae (strain ATCC BAA-1114 / GMI1000)</name>
    <name type="common">Ralstonia solanacearum</name>
    <dbReference type="NCBI Taxonomy" id="267608"/>
    <lineage>
        <taxon>Bacteria</taxon>
        <taxon>Pseudomonadati</taxon>
        <taxon>Pseudomonadota</taxon>
        <taxon>Betaproteobacteria</taxon>
        <taxon>Burkholderiales</taxon>
        <taxon>Burkholderiaceae</taxon>
        <taxon>Ralstonia</taxon>
        <taxon>Ralstonia solanacearum species complex</taxon>
    </lineage>
</organism>
<feature type="chain" id="PRO_0000270474" description="Arabinose import ATP-binding protein AraG">
    <location>
        <begin position="1"/>
        <end position="511"/>
    </location>
</feature>
<feature type="domain" description="ABC transporter 1" evidence="1">
    <location>
        <begin position="5"/>
        <end position="240"/>
    </location>
</feature>
<feature type="domain" description="ABC transporter 2" evidence="1">
    <location>
        <begin position="240"/>
        <end position="501"/>
    </location>
</feature>
<feature type="binding site" evidence="1">
    <location>
        <begin position="37"/>
        <end position="44"/>
    </location>
    <ligand>
        <name>ATP</name>
        <dbReference type="ChEBI" id="CHEBI:30616"/>
    </ligand>
</feature>
<name>ARAG_RALN1</name>
<gene>
    <name evidence="1" type="primary">araG</name>
    <name type="ordered locus">RSc2757</name>
</gene>
<proteinExistence type="inferred from homology"/>